<protein>
    <recommendedName>
        <fullName>Beta-lactamase SHV-24</fullName>
        <ecNumber>3.5.2.6</ecNumber>
    </recommendedName>
</protein>
<comment type="function">
    <text evidence="4">Hydrolyzes ampicillin. Can also hydrolyze cephaloridine, aztreonam and ceftazidime with a low catalytic rate.</text>
</comment>
<comment type="catalytic activity">
    <reaction evidence="3">
        <text>a beta-lactam + H2O = a substituted beta-amino acid</text>
        <dbReference type="Rhea" id="RHEA:20401"/>
        <dbReference type="ChEBI" id="CHEBI:15377"/>
        <dbReference type="ChEBI" id="CHEBI:35627"/>
        <dbReference type="ChEBI" id="CHEBI:140347"/>
        <dbReference type="EC" id="3.5.2.6"/>
    </reaction>
</comment>
<comment type="biophysicochemical properties">
    <kinetics>
        <KM evidence="4">32 uM for ampicillin</KM>
        <KM evidence="4">210 uM for cephaloridine</KM>
        <KM evidence="4">500 uM for aztreonam</KM>
        <KM evidence="4">30 uM for ceftazidime</KM>
        <Vmax evidence="4">0.366 umol/min/ug enzyme with ampicillin as substrate</Vmax>
        <Vmax evidence="4">0.434 umol/min/ug enzyme with cephaloridine as substrate</Vmax>
        <Vmax evidence="4">0.135 umol/min/ug enzyme with aztreonam as substrate</Vmax>
        <Vmax evidence="4">0.008 umol/min/ug enzyme with ceftazidime as substrate</Vmax>
    </kinetics>
</comment>
<comment type="miscellaneous">
    <text evidence="6">The class A beta-lactamase family has a specific amino-acid numbering system, sometimes called Ambler or ABL numbering and often misspelt as Amber. A multiple sequence alignment was used to derive a consensus sequence and then the consensus was numbered taking into account insertions and deletions. This allows use of identical numbers, e.g. for active site residues, despite differences in protein length. UniProt always uses natural numbering of residues, hence there appear to be differences in numbering between this entry and some papers.</text>
</comment>
<comment type="similarity">
    <text evidence="5">Belongs to the class-A beta-lactamase family.</text>
</comment>
<accession>Q9S169</accession>
<feature type="signal peptide" evidence="2">
    <location>
        <begin position="1"/>
        <end position="21"/>
    </location>
</feature>
<feature type="chain" id="PRO_0000016988" description="Beta-lactamase SHV-24">
    <location>
        <begin position="22"/>
        <end position="286"/>
    </location>
</feature>
<feature type="active site" description="Acyl-ester intermediate" evidence="3">
    <location>
        <position position="66"/>
    </location>
</feature>
<feature type="active site" description="Proton acceptor" evidence="1">
    <location>
        <position position="164"/>
    </location>
</feature>
<feature type="binding site" evidence="1">
    <location>
        <begin position="230"/>
        <end position="232"/>
    </location>
    <ligand>
        <name>substrate</name>
    </ligand>
</feature>
<feature type="disulfide bond" evidence="1">
    <location>
        <begin position="73"/>
        <end position="119"/>
    </location>
</feature>
<organism>
    <name type="scientific">Escherichia coli</name>
    <dbReference type="NCBI Taxonomy" id="562"/>
    <lineage>
        <taxon>Bacteria</taxon>
        <taxon>Pseudomonadati</taxon>
        <taxon>Pseudomonadota</taxon>
        <taxon>Gammaproteobacteria</taxon>
        <taxon>Enterobacterales</taxon>
        <taxon>Enterobacteriaceae</taxon>
        <taxon>Escherichia</taxon>
    </lineage>
</organism>
<proteinExistence type="evidence at protein level"/>
<keyword id="KW-0046">Antibiotic resistance</keyword>
<keyword id="KW-1015">Disulfide bond</keyword>
<keyword id="KW-0378">Hydrolase</keyword>
<keyword id="KW-0732">Signal</keyword>
<evidence type="ECO:0000250" key="1"/>
<evidence type="ECO:0000255" key="2"/>
<evidence type="ECO:0000255" key="3">
    <source>
        <dbReference type="PROSITE-ProRule" id="PRU10101"/>
    </source>
</evidence>
<evidence type="ECO:0000269" key="4">
    <source>
    </source>
</evidence>
<evidence type="ECO:0000305" key="5"/>
<evidence type="ECO:0000305" key="6">
    <source>
    </source>
</evidence>
<gene>
    <name type="primary">bla</name>
    <name type="synonym">shv24</name>
</gene>
<name>BLA24_ECOLX</name>
<reference key="1">
    <citation type="journal article" date="2000" name="Antimicrob. Agents Chemother.">
        <title>A new SHV-derived extended-spectrum beta-lactamase (SHV-24) that hydrolyzes ceftazidime through a single-amino-acid substitution (D179G) in the omega-loop.</title>
        <authorList>
            <person name="Kurokawa H."/>
            <person name="Yagi T."/>
            <person name="Shibata N."/>
            <person name="Shibayama K."/>
            <person name="Kamachi K."/>
            <person name="Arakawa Y."/>
        </authorList>
    </citation>
    <scope>NUCLEOTIDE SEQUENCE [GENOMIC DNA]</scope>
    <scope>FUNCTION</scope>
    <scope>BIOPHYSICOCHEMICAL PROPERTIES</scope>
    <source>
        <strain>HKY453</strain>
    </source>
</reference>
<reference key="2">
    <citation type="journal article" date="1991" name="Biochem. J.">
        <title>A standard numbering scheme for the class A beta-lactamases.</title>
        <authorList>
            <person name="Ambler R.P."/>
            <person name="Coulson A.F."/>
            <person name="Frere J.M."/>
            <person name="Ghuysen J.M."/>
            <person name="Joris B."/>
            <person name="Forsman M."/>
            <person name="Levesque R.C."/>
            <person name="Tiraby G."/>
            <person name="Waley S.G."/>
        </authorList>
    </citation>
    <scope>AMINO ACID NUMBERING SCHEME</scope>
</reference>
<sequence>MRYIRLCIISLLATLPLAVHASPQPLEQIKLSESQLSGRVGMIEMDLASGRTLTAWRADERFPMMSTFKVVLCGAVLARVDAGDEQLERKIHYRQQDLVDYSPVSEKHLADGMTVGELCAAAITMSDNSAANLLLATVGGPAGLTAFLRQIGDNVTRLDRWETELNEALPGDARGTTTPASMAATLRKLLTSQRLSARSQRQLLQWMVDDRVAGPLIRSVLPAGWFIADKTGAGERGARGIVALLGPNNKAERIVVIYLRDTPASMAERNQQIAGIGAALIEHWQR</sequence>
<dbReference type="EC" id="3.5.2.6"/>
<dbReference type="EMBL" id="AB023477">
    <property type="protein sequence ID" value="BAA84973.1"/>
    <property type="molecule type" value="Genomic_DNA"/>
</dbReference>
<dbReference type="SMR" id="Q9S169"/>
<dbReference type="CARD" id="ARO:3001082">
    <property type="molecule name" value="SHV-24"/>
    <property type="mechanism identifier" value="ARO:0001004"/>
    <property type="mechanism name" value="antibiotic inactivation"/>
</dbReference>
<dbReference type="KEGG" id="ag:BAA84973"/>
<dbReference type="SABIO-RK" id="Q9S169"/>
<dbReference type="GO" id="GO:0008800">
    <property type="term" value="F:beta-lactamase activity"/>
    <property type="evidence" value="ECO:0007669"/>
    <property type="project" value="UniProtKB-EC"/>
</dbReference>
<dbReference type="GO" id="GO:0030655">
    <property type="term" value="P:beta-lactam antibiotic catabolic process"/>
    <property type="evidence" value="ECO:0007669"/>
    <property type="project" value="InterPro"/>
</dbReference>
<dbReference type="GO" id="GO:0046677">
    <property type="term" value="P:response to antibiotic"/>
    <property type="evidence" value="ECO:0007669"/>
    <property type="project" value="UniProtKB-KW"/>
</dbReference>
<dbReference type="Gene3D" id="3.40.710.10">
    <property type="entry name" value="DD-peptidase/beta-lactamase superfamily"/>
    <property type="match status" value="1"/>
</dbReference>
<dbReference type="InterPro" id="IPR012338">
    <property type="entry name" value="Beta-lactam/transpept-like"/>
</dbReference>
<dbReference type="InterPro" id="IPR045155">
    <property type="entry name" value="Beta-lactam_cat"/>
</dbReference>
<dbReference type="InterPro" id="IPR000871">
    <property type="entry name" value="Beta-lactam_class-A"/>
</dbReference>
<dbReference type="InterPro" id="IPR023650">
    <property type="entry name" value="Beta-lactam_class-A_AS"/>
</dbReference>
<dbReference type="NCBIfam" id="NF033103">
    <property type="entry name" value="bla_class_A"/>
    <property type="match status" value="1"/>
</dbReference>
<dbReference type="NCBIfam" id="NF000285">
    <property type="entry name" value="SHV"/>
    <property type="match status" value="1"/>
</dbReference>
<dbReference type="NCBIfam" id="NF012143">
    <property type="entry name" value="SHV_LEN_OKP"/>
    <property type="match status" value="1"/>
</dbReference>
<dbReference type="PANTHER" id="PTHR35333">
    <property type="entry name" value="BETA-LACTAMASE"/>
    <property type="match status" value="1"/>
</dbReference>
<dbReference type="PANTHER" id="PTHR35333:SF3">
    <property type="entry name" value="BETA-LACTAMASE-TYPE TRANSPEPTIDASE FOLD CONTAINING PROTEIN"/>
    <property type="match status" value="1"/>
</dbReference>
<dbReference type="Pfam" id="PF13354">
    <property type="entry name" value="Beta-lactamase2"/>
    <property type="match status" value="1"/>
</dbReference>
<dbReference type="PRINTS" id="PR00118">
    <property type="entry name" value="BLACTAMASEA"/>
</dbReference>
<dbReference type="SUPFAM" id="SSF56601">
    <property type="entry name" value="beta-lactamase/transpeptidase-like"/>
    <property type="match status" value="1"/>
</dbReference>
<dbReference type="PROSITE" id="PS00146">
    <property type="entry name" value="BETA_LACTAMASE_A"/>
    <property type="match status" value="1"/>
</dbReference>